<protein>
    <recommendedName>
        <fullName evidence="1">ATP synthase subunit b</fullName>
    </recommendedName>
    <alternativeName>
        <fullName evidence="1">ATP synthase F(0) sector subunit b</fullName>
    </alternativeName>
    <alternativeName>
        <fullName evidence="1">ATPase subunit I</fullName>
    </alternativeName>
    <alternativeName>
        <fullName evidence="1">F-type ATPase subunit b</fullName>
        <shortName evidence="1">F-ATPase subunit b</shortName>
    </alternativeName>
</protein>
<reference key="1">
    <citation type="journal article" date="2002" name="Proc. Natl. Acad. Sci. U.S.A.">
        <title>Genome sequence of a serotype M3 strain of group A Streptococcus: phage-encoded toxins, the high-virulence phenotype, and clone emergence.</title>
        <authorList>
            <person name="Beres S.B."/>
            <person name="Sylva G.L."/>
            <person name="Barbian K.D."/>
            <person name="Lei B."/>
            <person name="Hoff J.S."/>
            <person name="Mammarella N.D."/>
            <person name="Liu M.-Y."/>
            <person name="Smoot J.C."/>
            <person name="Porcella S.F."/>
            <person name="Parkins L.D."/>
            <person name="Campbell D.S."/>
            <person name="Smith T.M."/>
            <person name="McCormick J.K."/>
            <person name="Leung D.Y.M."/>
            <person name="Schlievert P.M."/>
            <person name="Musser J.M."/>
        </authorList>
    </citation>
    <scope>NUCLEOTIDE SEQUENCE [LARGE SCALE GENOMIC DNA]</scope>
    <source>
        <strain>ATCC BAA-595 / MGAS315</strain>
    </source>
</reference>
<dbReference type="EMBL" id="AE014074">
    <property type="protein sequence ID" value="AAM79102.1"/>
    <property type="molecule type" value="Genomic_DNA"/>
</dbReference>
<dbReference type="RefSeq" id="WP_011054329.1">
    <property type="nucleotide sequence ID" value="NC_004070.1"/>
</dbReference>
<dbReference type="SMR" id="P0CZ92"/>
<dbReference type="KEGG" id="spg:SpyM3_0495"/>
<dbReference type="HOGENOM" id="CLU_079215_4_2_9"/>
<dbReference type="Proteomes" id="UP000000564">
    <property type="component" value="Chromosome"/>
</dbReference>
<dbReference type="GO" id="GO:0005886">
    <property type="term" value="C:plasma membrane"/>
    <property type="evidence" value="ECO:0007669"/>
    <property type="project" value="UniProtKB-SubCell"/>
</dbReference>
<dbReference type="GO" id="GO:0045259">
    <property type="term" value="C:proton-transporting ATP synthase complex"/>
    <property type="evidence" value="ECO:0007669"/>
    <property type="project" value="UniProtKB-KW"/>
</dbReference>
<dbReference type="GO" id="GO:0046933">
    <property type="term" value="F:proton-transporting ATP synthase activity, rotational mechanism"/>
    <property type="evidence" value="ECO:0007669"/>
    <property type="project" value="UniProtKB-UniRule"/>
</dbReference>
<dbReference type="GO" id="GO:0046961">
    <property type="term" value="F:proton-transporting ATPase activity, rotational mechanism"/>
    <property type="evidence" value="ECO:0007669"/>
    <property type="project" value="TreeGrafter"/>
</dbReference>
<dbReference type="CDD" id="cd06503">
    <property type="entry name" value="ATP-synt_Fo_b"/>
    <property type="match status" value="1"/>
</dbReference>
<dbReference type="HAMAP" id="MF_01398">
    <property type="entry name" value="ATP_synth_b_bprime"/>
    <property type="match status" value="1"/>
</dbReference>
<dbReference type="InterPro" id="IPR028987">
    <property type="entry name" value="ATP_synth_B-like_membr_sf"/>
</dbReference>
<dbReference type="InterPro" id="IPR002146">
    <property type="entry name" value="ATP_synth_b/b'su_bac/chlpt"/>
</dbReference>
<dbReference type="InterPro" id="IPR005864">
    <property type="entry name" value="ATP_synth_F0_bsu_bac"/>
</dbReference>
<dbReference type="InterPro" id="IPR050059">
    <property type="entry name" value="ATP_synthase_B_chain"/>
</dbReference>
<dbReference type="NCBIfam" id="TIGR01144">
    <property type="entry name" value="ATP_synt_b"/>
    <property type="match status" value="1"/>
</dbReference>
<dbReference type="PANTHER" id="PTHR33445:SF1">
    <property type="entry name" value="ATP SYNTHASE SUBUNIT B"/>
    <property type="match status" value="1"/>
</dbReference>
<dbReference type="PANTHER" id="PTHR33445">
    <property type="entry name" value="ATP SYNTHASE SUBUNIT B', CHLOROPLASTIC"/>
    <property type="match status" value="1"/>
</dbReference>
<dbReference type="Pfam" id="PF00430">
    <property type="entry name" value="ATP-synt_B"/>
    <property type="match status" value="1"/>
</dbReference>
<dbReference type="SUPFAM" id="SSF81573">
    <property type="entry name" value="F1F0 ATP synthase subunit B, membrane domain"/>
    <property type="match status" value="1"/>
</dbReference>
<keyword id="KW-0066">ATP synthesis</keyword>
<keyword id="KW-1003">Cell membrane</keyword>
<keyword id="KW-0138">CF(0)</keyword>
<keyword id="KW-0375">Hydrogen ion transport</keyword>
<keyword id="KW-0406">Ion transport</keyword>
<keyword id="KW-0472">Membrane</keyword>
<keyword id="KW-0812">Transmembrane</keyword>
<keyword id="KW-1133">Transmembrane helix</keyword>
<keyword id="KW-0813">Transport</keyword>
<comment type="function">
    <text evidence="1">F(1)F(0) ATP synthase produces ATP from ADP in the presence of a proton or sodium gradient. F-type ATPases consist of two structural domains, F(1) containing the extramembraneous catalytic core and F(0) containing the membrane proton channel, linked together by a central stalk and a peripheral stalk. During catalysis, ATP synthesis in the catalytic domain of F(1) is coupled via a rotary mechanism of the central stalk subunits to proton translocation.</text>
</comment>
<comment type="function">
    <text evidence="1">Component of the F(0) channel, it forms part of the peripheral stalk, linking F(1) to F(0).</text>
</comment>
<comment type="subunit">
    <text evidence="1">F-type ATPases have 2 components, F(1) - the catalytic core - and F(0) - the membrane proton channel. F(1) has five subunits: alpha(3), beta(3), gamma(1), delta(1), epsilon(1). F(0) has three main subunits: a(1), b(2) and c(10-14). The alpha and beta chains form an alternating ring which encloses part of the gamma chain. F(1) is attached to F(0) by a central stalk formed by the gamma and epsilon chains, while a peripheral stalk is formed by the delta and b chains.</text>
</comment>
<comment type="subcellular location">
    <subcellularLocation>
        <location evidence="1">Cell membrane</location>
        <topology evidence="1">Single-pass membrane protein</topology>
    </subcellularLocation>
</comment>
<comment type="similarity">
    <text evidence="1">Belongs to the ATPase B chain family.</text>
</comment>
<organism>
    <name type="scientific">Streptococcus pyogenes serotype M3 (strain ATCC BAA-595 / MGAS315)</name>
    <dbReference type="NCBI Taxonomy" id="198466"/>
    <lineage>
        <taxon>Bacteria</taxon>
        <taxon>Bacillati</taxon>
        <taxon>Bacillota</taxon>
        <taxon>Bacilli</taxon>
        <taxon>Lactobacillales</taxon>
        <taxon>Streptococcaceae</taxon>
        <taxon>Streptococcus</taxon>
    </lineage>
</organism>
<accession>P0CZ92</accession>
<accession>Q79WQ2</accession>
<accession>Q8K829</accession>
<proteinExistence type="inferred from homology"/>
<feature type="chain" id="PRO_0000368807" description="ATP synthase subunit b">
    <location>
        <begin position="1"/>
        <end position="164"/>
    </location>
</feature>
<feature type="transmembrane region" description="Helical" evidence="1">
    <location>
        <begin position="6"/>
        <end position="26"/>
    </location>
</feature>
<gene>
    <name evidence="1" type="primary">atpF</name>
    <name type="ordered locus">SpyM3_0495</name>
</gene>
<sequence>MSITFGELVGNFILVTGSVIVLLLLIKKFAWGAIESILQTRSQQISRDIDQAEQSRLSAQQLEAKSQANLDASRSQASKIISDAKEIGQLQGDKLVAEATDEAKRLKEKALTDIEQSKSDAISAVKTEMSDLTVLLAKKIMGANLDKTAQSQLIDSYLDDLGEA</sequence>
<name>ATPF_STRP3</name>
<evidence type="ECO:0000255" key="1">
    <source>
        <dbReference type="HAMAP-Rule" id="MF_01398"/>
    </source>
</evidence>